<keyword id="KW-1185">Reference proteome</keyword>
<keyword id="KW-0687">Ribonucleoprotein</keyword>
<keyword id="KW-0689">Ribosomal protein</keyword>
<keyword id="KW-0694">RNA-binding</keyword>
<keyword id="KW-0699">rRNA-binding</keyword>
<evidence type="ECO:0000255" key="1">
    <source>
        <dbReference type="HAMAP-Rule" id="MF_01310"/>
    </source>
</evidence>
<evidence type="ECO:0000256" key="2">
    <source>
        <dbReference type="SAM" id="MobiDB-lite"/>
    </source>
</evidence>
<evidence type="ECO:0000305" key="3"/>
<gene>
    <name evidence="1" type="primary">rpsK</name>
    <name type="ordered locus">MRA_3500</name>
</gene>
<organism>
    <name type="scientific">Mycobacterium tuberculosis (strain ATCC 25177 / H37Ra)</name>
    <dbReference type="NCBI Taxonomy" id="419947"/>
    <lineage>
        <taxon>Bacteria</taxon>
        <taxon>Bacillati</taxon>
        <taxon>Actinomycetota</taxon>
        <taxon>Actinomycetes</taxon>
        <taxon>Mycobacteriales</taxon>
        <taxon>Mycobacteriaceae</taxon>
        <taxon>Mycobacterium</taxon>
        <taxon>Mycobacterium tuberculosis complex</taxon>
    </lineage>
</organism>
<dbReference type="EMBL" id="CP000611">
    <property type="protein sequence ID" value="ABQ75285.1"/>
    <property type="molecule type" value="Genomic_DNA"/>
</dbReference>
<dbReference type="RefSeq" id="WP_003900064.1">
    <property type="nucleotide sequence ID" value="NZ_CP016972.1"/>
</dbReference>
<dbReference type="SMR" id="A5U8D5"/>
<dbReference type="GeneID" id="45427448"/>
<dbReference type="KEGG" id="mra:MRA_3500"/>
<dbReference type="eggNOG" id="COG0100">
    <property type="taxonomic scope" value="Bacteria"/>
</dbReference>
<dbReference type="HOGENOM" id="CLU_072439_5_0_11"/>
<dbReference type="Proteomes" id="UP000001988">
    <property type="component" value="Chromosome"/>
</dbReference>
<dbReference type="GO" id="GO:1990904">
    <property type="term" value="C:ribonucleoprotein complex"/>
    <property type="evidence" value="ECO:0007669"/>
    <property type="project" value="UniProtKB-KW"/>
</dbReference>
<dbReference type="GO" id="GO:0005840">
    <property type="term" value="C:ribosome"/>
    <property type="evidence" value="ECO:0007669"/>
    <property type="project" value="UniProtKB-KW"/>
</dbReference>
<dbReference type="GO" id="GO:0019843">
    <property type="term" value="F:rRNA binding"/>
    <property type="evidence" value="ECO:0007669"/>
    <property type="project" value="UniProtKB-UniRule"/>
</dbReference>
<dbReference type="GO" id="GO:0003735">
    <property type="term" value="F:structural constituent of ribosome"/>
    <property type="evidence" value="ECO:0007669"/>
    <property type="project" value="InterPro"/>
</dbReference>
<dbReference type="GO" id="GO:0006412">
    <property type="term" value="P:translation"/>
    <property type="evidence" value="ECO:0007669"/>
    <property type="project" value="UniProtKB-UniRule"/>
</dbReference>
<dbReference type="FunFam" id="3.30.420.80:FF:000001">
    <property type="entry name" value="30S ribosomal protein S11"/>
    <property type="match status" value="1"/>
</dbReference>
<dbReference type="Gene3D" id="3.30.420.80">
    <property type="entry name" value="Ribosomal protein S11"/>
    <property type="match status" value="1"/>
</dbReference>
<dbReference type="HAMAP" id="MF_01310">
    <property type="entry name" value="Ribosomal_uS11"/>
    <property type="match status" value="1"/>
</dbReference>
<dbReference type="InterPro" id="IPR001971">
    <property type="entry name" value="Ribosomal_uS11"/>
</dbReference>
<dbReference type="InterPro" id="IPR019981">
    <property type="entry name" value="Ribosomal_uS11_bac-type"/>
</dbReference>
<dbReference type="InterPro" id="IPR018102">
    <property type="entry name" value="Ribosomal_uS11_CS"/>
</dbReference>
<dbReference type="InterPro" id="IPR036967">
    <property type="entry name" value="Ribosomal_uS11_sf"/>
</dbReference>
<dbReference type="NCBIfam" id="NF003698">
    <property type="entry name" value="PRK05309.1"/>
    <property type="match status" value="1"/>
</dbReference>
<dbReference type="NCBIfam" id="TIGR03632">
    <property type="entry name" value="uS11_bact"/>
    <property type="match status" value="1"/>
</dbReference>
<dbReference type="PANTHER" id="PTHR11759">
    <property type="entry name" value="40S RIBOSOMAL PROTEIN S14/30S RIBOSOMAL PROTEIN S11"/>
    <property type="match status" value="1"/>
</dbReference>
<dbReference type="Pfam" id="PF00411">
    <property type="entry name" value="Ribosomal_S11"/>
    <property type="match status" value="1"/>
</dbReference>
<dbReference type="PIRSF" id="PIRSF002131">
    <property type="entry name" value="Ribosomal_S11"/>
    <property type="match status" value="1"/>
</dbReference>
<dbReference type="SUPFAM" id="SSF53137">
    <property type="entry name" value="Translational machinery components"/>
    <property type="match status" value="1"/>
</dbReference>
<dbReference type="PROSITE" id="PS00054">
    <property type="entry name" value="RIBOSOMAL_S11"/>
    <property type="match status" value="1"/>
</dbReference>
<protein>
    <recommendedName>
        <fullName evidence="1">Small ribosomal subunit protein uS11</fullName>
    </recommendedName>
    <alternativeName>
        <fullName evidence="3">30S ribosomal protein S11</fullName>
    </alternativeName>
</protein>
<sequence length="139" mass="14785">MPPAKKGPATSARKGQKTRRREKKNVPHGAAHIKSTFNNTIVTITDPQGNVIAWASSGHVGFKGSRKSTPFAAQLAAENAARKAQDHGVRKVDVFVKGPGSGRETAIRSLQAAGLEVGAISDVTPQPHNGVRPPKRRRV</sequence>
<feature type="chain" id="PRO_1000051840" description="Small ribosomal subunit protein uS11">
    <location>
        <begin position="1"/>
        <end position="139"/>
    </location>
</feature>
<feature type="region of interest" description="Disordered" evidence="2">
    <location>
        <begin position="1"/>
        <end position="33"/>
    </location>
</feature>
<feature type="region of interest" description="Disordered" evidence="2">
    <location>
        <begin position="118"/>
        <end position="139"/>
    </location>
</feature>
<feature type="compositionally biased region" description="Basic residues" evidence="2">
    <location>
        <begin position="14"/>
        <end position="23"/>
    </location>
</feature>
<comment type="function">
    <text evidence="1">Located on the platform of the 30S subunit, it bridges several disparate RNA helices of the 16S rRNA. Forms part of the Shine-Dalgarno cleft in the 70S ribosome.</text>
</comment>
<comment type="subunit">
    <text evidence="1">Part of the 30S ribosomal subunit. Interacts with proteins S7 and S18. Binds to IF-3.</text>
</comment>
<comment type="similarity">
    <text evidence="1">Belongs to the universal ribosomal protein uS11 family.</text>
</comment>
<accession>A5U8D5</accession>
<proteinExistence type="inferred from homology"/>
<name>RS11_MYCTA</name>
<reference key="1">
    <citation type="journal article" date="2008" name="PLoS ONE">
        <title>Genetic basis of virulence attenuation revealed by comparative genomic analysis of Mycobacterium tuberculosis strain H37Ra versus H37Rv.</title>
        <authorList>
            <person name="Zheng H."/>
            <person name="Lu L."/>
            <person name="Wang B."/>
            <person name="Pu S."/>
            <person name="Zhang X."/>
            <person name="Zhu G."/>
            <person name="Shi W."/>
            <person name="Zhang L."/>
            <person name="Wang H."/>
            <person name="Wang S."/>
            <person name="Zhao G."/>
            <person name="Zhang Y."/>
        </authorList>
    </citation>
    <scope>NUCLEOTIDE SEQUENCE [LARGE SCALE GENOMIC DNA]</scope>
    <source>
        <strain>ATCC 25177 / H37Ra</strain>
    </source>
</reference>